<reference key="1">
    <citation type="journal article" date="1989" name="J. Virol.">
        <title>Regulated expression of early and late RNAs and proteins from the human cytomegalovirus immediate-early gene region.</title>
        <authorList>
            <person name="Stenberg R.M."/>
            <person name="Depto A.S."/>
            <person name="Fortney J."/>
            <person name="Nelson J.A."/>
        </authorList>
    </citation>
    <scope>NUCLEOTIDE SEQUENCE [GENOMIC DNA] (ISOFORM 45 KDA IMMEDIATE-EARLY PROTEIN 2)</scope>
</reference>
<reference key="2">
    <citation type="journal article" date="1985" name="J. Virol.">
        <title>Multiple spliced and unspliced transcripts from human cytomegalovirus immediate-early region 2 and evidence for a common initiation site within immediate-early region 1.</title>
        <authorList>
            <person name="Stenberg R.M."/>
            <person name="Witte P.R."/>
            <person name="Stinski M.F."/>
        </authorList>
    </citation>
    <scope>NUCLEOTIDE SEQUENCE [GENOMIC DNA] (ISOFORM 27 KDA IMMEDIATE-EARLY PROTEIN 2)</scope>
</reference>
<sequence length="410" mass="44774">MLPLIKQEDIKPEPDFTIQYRNKIIDTAGCIVISDSEEEQGEEVETRGATASSPSTGSGTPRVTSPTHPLSQMNHPPLPDPLGRPDEDSSSSSSSCSSASDSESESEEMKCSSGGGASVTSSHHGRGGFGGAASSSLLSCGHQSSGGASTGPRKKKSKRISELDNEKVRNIMKDKNTPFCTPNVQTRRGRVKIDEVSRMFRNTNRSLEYKNLPFTIPSMHQVLDEAIKACKTMQVNNKGIQIIYTRNHEVKSEVDAVRCRLGTMCNLALSTPFLMEHTMPVTHPPKVAQRTADACNEGVKAAWSLKELHTHQLCPRSSDYRNMIIHAATPVDLLGALNLCLPLMQKFPKQVMVRIFSTNQGGFMLPIYETATKAYAVGQFEQPTETPPEDLDTLSLAIEAAIQDLRNKSQ</sequence>
<organismHost>
    <name type="scientific">Homo sapiens</name>
    <name type="common">Human</name>
    <dbReference type="NCBI Taxonomy" id="9606"/>
</organismHost>
<keyword id="KW-0010">Activator</keyword>
<keyword id="KW-0025">Alternative splicing</keyword>
<keyword id="KW-0238">DNA-binding</keyword>
<keyword id="KW-0244">Early protein</keyword>
<keyword id="KW-1077">G0/G1 host cell cycle checkpoint dysregulation by virus</keyword>
<keyword id="KW-1078">G1/S host cell cycle checkpoint dysregulation by virus</keyword>
<keyword id="KW-0945">Host-virus interaction</keyword>
<keyword id="KW-0479">Metal-binding</keyword>
<keyword id="KW-1121">Modulation of host cell cycle by virus</keyword>
<keyword id="KW-0804">Transcription</keyword>
<keyword id="KW-0805">Transcription regulation</keyword>
<keyword id="KW-0862">Zinc</keyword>
<keyword id="KW-0863">Zinc-finger</keyword>
<gene>
    <name type="primary">UL122</name>
</gene>
<feature type="chain" id="PRO_0000115352" description="45 kDa immediate-early protein 2">
    <location>
        <begin position="1"/>
        <end position="410"/>
    </location>
</feature>
<feature type="zinc finger region" evidence="1">
    <location>
        <begin position="257"/>
        <end position="283"/>
    </location>
</feature>
<feature type="region of interest" description="Disordered" evidence="2">
    <location>
        <begin position="36"/>
        <end position="166"/>
    </location>
</feature>
<feature type="compositionally biased region" description="Low complexity" evidence="2">
    <location>
        <begin position="47"/>
        <end position="67"/>
    </location>
</feature>
<feature type="compositionally biased region" description="Low complexity" evidence="2">
    <location>
        <begin position="90"/>
        <end position="101"/>
    </location>
</feature>
<feature type="compositionally biased region" description="Low complexity" evidence="2">
    <location>
        <begin position="132"/>
        <end position="147"/>
    </location>
</feature>
<feature type="splice variant" id="VSP_015365" description="In isoform 27 kDa immediate-early protein 2." evidence="3">
    <location>
        <begin position="187"/>
        <end position="351"/>
    </location>
</feature>
<accession>P06435</accession>
<organism>
    <name type="scientific">Human cytomegalovirus (strain Towne)</name>
    <name type="common">HHV-5</name>
    <name type="synonym">Human herpesvirus 5</name>
    <dbReference type="NCBI Taxonomy" id="10363"/>
    <lineage>
        <taxon>Viruses</taxon>
        <taxon>Duplodnaviria</taxon>
        <taxon>Heunggongvirae</taxon>
        <taxon>Peploviricota</taxon>
        <taxon>Herviviricetes</taxon>
        <taxon>Herpesvirales</taxon>
        <taxon>Orthoherpesviridae</taxon>
        <taxon>Betaherpesvirinae</taxon>
        <taxon>Cytomegalovirus</taxon>
        <taxon>Cytomegalovirus humanbeta5</taxon>
        <taxon>Human cytomegalovirus</taxon>
    </lineage>
</organism>
<proteinExistence type="predicted"/>
<dbReference type="EMBL" id="AH002793">
    <property type="protein sequence ID" value="AAA57208.1"/>
    <property type="molecule type" value="Genomic_DNA"/>
</dbReference>
<dbReference type="EMBL" id="AH002793">
    <property type="protein sequence ID" value="AAA57205.1"/>
    <property type="status" value="ALT_INIT"/>
    <property type="molecule type" value="Genomic_DNA"/>
</dbReference>
<dbReference type="EMBL" id="AH002793">
    <property type="protein sequence ID" value="AAA57206.1"/>
    <property type="status" value="ALT_INIT"/>
    <property type="molecule type" value="Genomic_DNA"/>
</dbReference>
<dbReference type="EMBL" id="AH002793">
    <property type="protein sequence ID" value="AAA57207.1"/>
    <property type="status" value="ALT_INIT"/>
    <property type="molecule type" value="Genomic_DNA"/>
</dbReference>
<dbReference type="EMBL" id="M11298">
    <property type="protein sequence ID" value="AAA45950.1"/>
    <property type="molecule type" value="Genomic_DNA"/>
</dbReference>
<dbReference type="PIR" id="A33347">
    <property type="entry name" value="EDBE4T"/>
</dbReference>
<dbReference type="SMR" id="P06435"/>
<dbReference type="DrugBank" id="DB06759">
    <property type="generic name" value="Fomivirsen"/>
</dbReference>
<dbReference type="GO" id="GO:0003677">
    <property type="term" value="F:DNA binding"/>
    <property type="evidence" value="ECO:0007669"/>
    <property type="project" value="UniProtKB-KW"/>
</dbReference>
<dbReference type="GO" id="GO:0008270">
    <property type="term" value="F:zinc ion binding"/>
    <property type="evidence" value="ECO:0007669"/>
    <property type="project" value="UniProtKB-KW"/>
</dbReference>
<dbReference type="GO" id="GO:0006355">
    <property type="term" value="P:regulation of DNA-templated transcription"/>
    <property type="evidence" value="ECO:0007669"/>
    <property type="project" value="InterPro"/>
</dbReference>
<dbReference type="GO" id="GO:0039646">
    <property type="term" value="P:symbiont-mediated perturbation of host cell cycle G0/G1 transition checkpoint"/>
    <property type="evidence" value="ECO:0007669"/>
    <property type="project" value="UniProtKB-KW"/>
</dbReference>
<dbReference type="GO" id="GO:0039645">
    <property type="term" value="P:symbiont-mediated perturbation of host cell cycle G1/S transition checkpoint"/>
    <property type="evidence" value="ECO:0007669"/>
    <property type="project" value="UniProtKB-KW"/>
</dbReference>
<dbReference type="InterPro" id="IPR005028">
    <property type="entry name" value="Herpes_IE2_3"/>
</dbReference>
<dbReference type="Pfam" id="PF03361">
    <property type="entry name" value="Herpes_IE2_3"/>
    <property type="match status" value="1"/>
</dbReference>
<protein>
    <recommendedName>
        <fullName>45 kDa immediate-early protein 2</fullName>
        <shortName>IE2</shortName>
    </recommendedName>
</protein>
<comment type="function">
    <text>Activates the E1.7 promoter. This activation is augmented by the IE1 protein. It down-regulates the transcription of genes under the control of the major IE promoter.</text>
</comment>
<comment type="alternative products">
    <event type="alternative splicing"/>
    <isoform>
        <id>P06435-1</id>
        <name>45 kDa immediate-early protein 2</name>
        <sequence type="displayed"/>
    </isoform>
    <isoform>
        <id>P06435-2</id>
        <name>27 kDa immediate-early protein 2</name>
        <sequence type="described" ref="VSP_015365"/>
    </isoform>
    <text>At least 2 isoforms are produced.</text>
</comment>
<comment type="sequence caution" evidence="3">
    <conflict type="erroneous initiation">
        <sequence resource="EMBL-CDS" id="AAA57205"/>
    </conflict>
</comment>
<comment type="sequence caution" evidence="3">
    <conflict type="erroneous initiation">
        <sequence resource="EMBL-CDS" id="AAA57206"/>
    </conflict>
</comment>
<comment type="sequence caution" evidence="3">
    <conflict type="erroneous initiation">
        <sequence resource="EMBL-CDS" id="AAA57207"/>
    </conflict>
</comment>
<name>IE247_HCMVT</name>
<evidence type="ECO:0000255" key="1"/>
<evidence type="ECO:0000256" key="2">
    <source>
        <dbReference type="SAM" id="MobiDB-lite"/>
    </source>
</evidence>
<evidence type="ECO:0000305" key="3"/>